<dbReference type="EC" id="4.1.1.31" evidence="1"/>
<dbReference type="EMBL" id="AE005672">
    <property type="protein sequence ID" value="AAK75181.1"/>
    <property type="molecule type" value="Genomic_DNA"/>
</dbReference>
<dbReference type="PIR" id="D95123">
    <property type="entry name" value="D95123"/>
</dbReference>
<dbReference type="RefSeq" id="WP_000058203.1">
    <property type="nucleotide sequence ID" value="NZ_CP155539.1"/>
</dbReference>
<dbReference type="SMR" id="Q97QX6"/>
<dbReference type="PaxDb" id="170187-SP_1068"/>
<dbReference type="EnsemblBacteria" id="AAK75181">
    <property type="protein sequence ID" value="AAK75181"/>
    <property type="gene ID" value="SP_1068"/>
</dbReference>
<dbReference type="KEGG" id="spn:SP_1068"/>
<dbReference type="eggNOG" id="COG2352">
    <property type="taxonomic scope" value="Bacteria"/>
</dbReference>
<dbReference type="PhylomeDB" id="Q97QX6"/>
<dbReference type="BioCyc" id="SPNE170187:G1FZB-1096-MONOMER"/>
<dbReference type="Proteomes" id="UP000000585">
    <property type="component" value="Chromosome"/>
</dbReference>
<dbReference type="GO" id="GO:0005829">
    <property type="term" value="C:cytosol"/>
    <property type="evidence" value="ECO:0007669"/>
    <property type="project" value="TreeGrafter"/>
</dbReference>
<dbReference type="GO" id="GO:0000287">
    <property type="term" value="F:magnesium ion binding"/>
    <property type="evidence" value="ECO:0007669"/>
    <property type="project" value="UniProtKB-UniRule"/>
</dbReference>
<dbReference type="GO" id="GO:0008964">
    <property type="term" value="F:phosphoenolpyruvate carboxylase activity"/>
    <property type="evidence" value="ECO:0007669"/>
    <property type="project" value="UniProtKB-UniRule"/>
</dbReference>
<dbReference type="GO" id="GO:0015977">
    <property type="term" value="P:carbon fixation"/>
    <property type="evidence" value="ECO:0007669"/>
    <property type="project" value="UniProtKB-UniRule"/>
</dbReference>
<dbReference type="GO" id="GO:0006107">
    <property type="term" value="P:oxaloacetate metabolic process"/>
    <property type="evidence" value="ECO:0007669"/>
    <property type="project" value="UniProtKB-UniRule"/>
</dbReference>
<dbReference type="GO" id="GO:0006099">
    <property type="term" value="P:tricarboxylic acid cycle"/>
    <property type="evidence" value="ECO:0007669"/>
    <property type="project" value="InterPro"/>
</dbReference>
<dbReference type="Gene3D" id="1.20.1440.90">
    <property type="entry name" value="Phosphoenolpyruvate/pyruvate domain"/>
    <property type="match status" value="1"/>
</dbReference>
<dbReference type="HAMAP" id="MF_00595">
    <property type="entry name" value="PEPcase_type1"/>
    <property type="match status" value="1"/>
</dbReference>
<dbReference type="InterPro" id="IPR021135">
    <property type="entry name" value="PEP_COase"/>
</dbReference>
<dbReference type="InterPro" id="IPR022805">
    <property type="entry name" value="PEP_COase_bac/pln-type"/>
</dbReference>
<dbReference type="InterPro" id="IPR018129">
    <property type="entry name" value="PEP_COase_Lys_AS"/>
</dbReference>
<dbReference type="InterPro" id="IPR033129">
    <property type="entry name" value="PEPCASE_His_AS"/>
</dbReference>
<dbReference type="InterPro" id="IPR015813">
    <property type="entry name" value="Pyrv/PenolPyrv_kinase-like_dom"/>
</dbReference>
<dbReference type="NCBIfam" id="NF000584">
    <property type="entry name" value="PRK00009.1"/>
    <property type="match status" value="1"/>
</dbReference>
<dbReference type="PANTHER" id="PTHR30523">
    <property type="entry name" value="PHOSPHOENOLPYRUVATE CARBOXYLASE"/>
    <property type="match status" value="1"/>
</dbReference>
<dbReference type="PANTHER" id="PTHR30523:SF6">
    <property type="entry name" value="PHOSPHOENOLPYRUVATE CARBOXYLASE"/>
    <property type="match status" value="1"/>
</dbReference>
<dbReference type="Pfam" id="PF00311">
    <property type="entry name" value="PEPcase"/>
    <property type="match status" value="1"/>
</dbReference>
<dbReference type="PRINTS" id="PR00150">
    <property type="entry name" value="PEPCARBXLASE"/>
</dbReference>
<dbReference type="SUPFAM" id="SSF51621">
    <property type="entry name" value="Phosphoenolpyruvate/pyruvate domain"/>
    <property type="match status" value="1"/>
</dbReference>
<dbReference type="PROSITE" id="PS00781">
    <property type="entry name" value="PEPCASE_1"/>
    <property type="match status" value="1"/>
</dbReference>
<dbReference type="PROSITE" id="PS00393">
    <property type="entry name" value="PEPCASE_2"/>
    <property type="match status" value="1"/>
</dbReference>
<feature type="chain" id="PRO_0000166630" description="Phosphoenolpyruvate carboxylase">
    <location>
        <begin position="1"/>
        <end position="898"/>
    </location>
</feature>
<feature type="active site" evidence="1">
    <location>
        <position position="138"/>
    </location>
</feature>
<feature type="active site" evidence="1">
    <location>
        <position position="561"/>
    </location>
</feature>
<protein>
    <recommendedName>
        <fullName evidence="1">Phosphoenolpyruvate carboxylase</fullName>
        <shortName evidence="1">PEPC</shortName>
        <shortName evidence="1">PEPCase</shortName>
        <ecNumber evidence="1">4.1.1.31</ecNumber>
    </recommendedName>
</protein>
<reference key="1">
    <citation type="journal article" date="2001" name="Science">
        <title>Complete genome sequence of a virulent isolate of Streptococcus pneumoniae.</title>
        <authorList>
            <person name="Tettelin H."/>
            <person name="Nelson K.E."/>
            <person name="Paulsen I.T."/>
            <person name="Eisen J.A."/>
            <person name="Read T.D."/>
            <person name="Peterson S.N."/>
            <person name="Heidelberg J.F."/>
            <person name="DeBoy R.T."/>
            <person name="Haft D.H."/>
            <person name="Dodson R.J."/>
            <person name="Durkin A.S."/>
            <person name="Gwinn M.L."/>
            <person name="Kolonay J.F."/>
            <person name="Nelson W.C."/>
            <person name="Peterson J.D."/>
            <person name="Umayam L.A."/>
            <person name="White O."/>
            <person name="Salzberg S.L."/>
            <person name="Lewis M.R."/>
            <person name="Radune D."/>
            <person name="Holtzapple E.K."/>
            <person name="Khouri H.M."/>
            <person name="Wolf A.M."/>
            <person name="Utterback T.R."/>
            <person name="Hansen C.L."/>
            <person name="McDonald L.A."/>
            <person name="Feldblyum T.V."/>
            <person name="Angiuoli S.V."/>
            <person name="Dickinson T."/>
            <person name="Hickey E.K."/>
            <person name="Holt I.E."/>
            <person name="Loftus B.J."/>
            <person name="Yang F."/>
            <person name="Smith H.O."/>
            <person name="Venter J.C."/>
            <person name="Dougherty B.A."/>
            <person name="Morrison D.A."/>
            <person name="Hollingshead S.K."/>
            <person name="Fraser C.M."/>
        </authorList>
    </citation>
    <scope>NUCLEOTIDE SEQUENCE [LARGE SCALE GENOMIC DNA]</scope>
    <source>
        <strain>ATCC BAA-334 / TIGR4</strain>
    </source>
</reference>
<name>CAPP_STRPN</name>
<gene>
    <name evidence="1" type="primary">ppc</name>
    <name type="ordered locus">SP_1068</name>
</gene>
<sequence length="898" mass="103315">MSLQKLENYSNKSVVQEEVLILTELLEDITKNMLAPETFEKIIQLKELSTQEDYQGLNRLVTSLSNDEMVYISRYFSILPLLINISEDVDLAYEINHQNNIDQDYLGKLSTTIKLVAEKENAVEILEHLNVVPVLTAHPTQVQRKSMLDLTNHIHSLLRKYRDVKLGLINKDKWYNDLRRYIEIIMQTDMIREKKLKVTNEITNAMEYYNSSFLKAVPHLTTEYKRLAQAHGLNLKQAKPITMGMWIGGDRDGNPFVTAKTLKQSALTQCEVIMNYYDKKIYQLYREFSLSTSIVNVSKQVREMARQSKDNSIYREKELYRRALFDIQSKIQATKTYLIEDEEVGTRYETANDFYKDLIAIRDSLLENKGESLISGDFVELLQAVEIFGFYLASIDMRQDSSVYEACVAELLKSAGIHSRYSELSEEEKCDLLLKELEEDPRILSATHAEKSELLAKELAIFKTARVLKDKLGDDVIRQTIISHATSLSDMLELAILLKEVGLVDTERARVQIVPLFETIEDLDHSEETMRKYLSLSLAKKWIDSRNNYQEIMLGYSDSNKDGGYLSSCWTLYKAQQQLTAIGDEFGVKVTFFHGRGGTVGRGGGPTYEAITSQPLKSIKDRIRLTEQGEVIGNKYGNKDAAYYNLEMLVSAAINRMITQKKSDTNTPNRYETIMDQVVDRSYDIYRDLVFGNEHFYDYFFESSPIKAISSFNIGSRPAARKTITEIGGLRAIPWVFSWSQSRVMFPGWYGVGSSFKEFINKNPENIAILRDMYQNWPFFQSLLSNVDMVLSKSNMNIAFEYAKLCEDEQVKAIYETILNEWQVTKNVILAIEGHDELLADNPYLKASLDYRMPYFNILNYIQLELIKRQRRGELSSDQERLIHITINGIATGLRNSG</sequence>
<accession>Q97QX6</accession>
<evidence type="ECO:0000255" key="1">
    <source>
        <dbReference type="HAMAP-Rule" id="MF_00595"/>
    </source>
</evidence>
<comment type="function">
    <text evidence="1">Forms oxaloacetate, a four-carbon dicarboxylic acid source for the tricarboxylic acid cycle.</text>
</comment>
<comment type="catalytic activity">
    <reaction evidence="1">
        <text>oxaloacetate + phosphate = phosphoenolpyruvate + hydrogencarbonate</text>
        <dbReference type="Rhea" id="RHEA:28370"/>
        <dbReference type="ChEBI" id="CHEBI:16452"/>
        <dbReference type="ChEBI" id="CHEBI:17544"/>
        <dbReference type="ChEBI" id="CHEBI:43474"/>
        <dbReference type="ChEBI" id="CHEBI:58702"/>
        <dbReference type="EC" id="4.1.1.31"/>
    </reaction>
</comment>
<comment type="cofactor">
    <cofactor evidence="1">
        <name>Mg(2+)</name>
        <dbReference type="ChEBI" id="CHEBI:18420"/>
    </cofactor>
</comment>
<comment type="similarity">
    <text evidence="1">Belongs to the PEPCase type 1 family.</text>
</comment>
<keyword id="KW-0120">Carbon dioxide fixation</keyword>
<keyword id="KW-0456">Lyase</keyword>
<keyword id="KW-0460">Magnesium</keyword>
<keyword id="KW-1185">Reference proteome</keyword>
<organism>
    <name type="scientific">Streptococcus pneumoniae serotype 4 (strain ATCC BAA-334 / TIGR4)</name>
    <dbReference type="NCBI Taxonomy" id="170187"/>
    <lineage>
        <taxon>Bacteria</taxon>
        <taxon>Bacillati</taxon>
        <taxon>Bacillota</taxon>
        <taxon>Bacilli</taxon>
        <taxon>Lactobacillales</taxon>
        <taxon>Streptococcaceae</taxon>
        <taxon>Streptococcus</taxon>
    </lineage>
</organism>
<proteinExistence type="inferred from homology"/>